<accession>B3PMB4</accession>
<reference key="1">
    <citation type="journal article" date="2008" name="Infect. Immun.">
        <title>Genome of Mycoplasma arthritidis.</title>
        <authorList>
            <person name="Dybvig K."/>
            <person name="Zuhua C."/>
            <person name="Lao P."/>
            <person name="Jordan D.S."/>
            <person name="French C.T."/>
            <person name="Tu A.H."/>
            <person name="Loraine A.E."/>
        </authorList>
    </citation>
    <scope>NUCLEOTIDE SEQUENCE [LARGE SCALE GENOMIC DNA]</scope>
    <source>
        <strain>158L3-1</strain>
    </source>
</reference>
<protein>
    <recommendedName>
        <fullName evidence="1">Ribosomal RNA small subunit methyltransferase H</fullName>
        <ecNumber evidence="1">2.1.1.199</ecNumber>
    </recommendedName>
    <alternativeName>
        <fullName evidence="1">16S rRNA m(4)C1402 methyltransferase</fullName>
    </alternativeName>
    <alternativeName>
        <fullName evidence="1">rRNA (cytosine-N(4)-)-methyltransferase RsmH</fullName>
    </alternativeName>
</protein>
<gene>
    <name evidence="1" type="primary">rsmH</name>
    <name type="synonym">mraW</name>
    <name type="ordered locus">MARTH_orf262</name>
</gene>
<comment type="function">
    <text evidence="1">Specifically methylates the N4 position of cytidine in position 1402 (C1402) of 16S rRNA.</text>
</comment>
<comment type="catalytic activity">
    <reaction evidence="1">
        <text>cytidine(1402) in 16S rRNA + S-adenosyl-L-methionine = N(4)-methylcytidine(1402) in 16S rRNA + S-adenosyl-L-homocysteine + H(+)</text>
        <dbReference type="Rhea" id="RHEA:42928"/>
        <dbReference type="Rhea" id="RHEA-COMP:10286"/>
        <dbReference type="Rhea" id="RHEA-COMP:10287"/>
        <dbReference type="ChEBI" id="CHEBI:15378"/>
        <dbReference type="ChEBI" id="CHEBI:57856"/>
        <dbReference type="ChEBI" id="CHEBI:59789"/>
        <dbReference type="ChEBI" id="CHEBI:74506"/>
        <dbReference type="ChEBI" id="CHEBI:82748"/>
        <dbReference type="EC" id="2.1.1.199"/>
    </reaction>
</comment>
<comment type="subcellular location">
    <subcellularLocation>
        <location evidence="1">Cytoplasm</location>
    </subcellularLocation>
</comment>
<comment type="similarity">
    <text evidence="1">Belongs to the methyltransferase superfamily. RsmH family.</text>
</comment>
<organism>
    <name type="scientific">Metamycoplasma arthritidis (strain 158L3-1)</name>
    <name type="common">Mycoplasma arthritidis</name>
    <dbReference type="NCBI Taxonomy" id="243272"/>
    <lineage>
        <taxon>Bacteria</taxon>
        <taxon>Bacillati</taxon>
        <taxon>Mycoplasmatota</taxon>
        <taxon>Mycoplasmoidales</taxon>
        <taxon>Metamycoplasmataceae</taxon>
        <taxon>Metamycoplasma</taxon>
    </lineage>
</organism>
<keyword id="KW-0963">Cytoplasm</keyword>
<keyword id="KW-0489">Methyltransferase</keyword>
<keyword id="KW-1185">Reference proteome</keyword>
<keyword id="KW-0698">rRNA processing</keyword>
<keyword id="KW-0949">S-adenosyl-L-methionine</keyword>
<keyword id="KW-0808">Transferase</keyword>
<dbReference type="EC" id="2.1.1.199" evidence="1"/>
<dbReference type="EMBL" id="CP001047">
    <property type="protein sequence ID" value="ACF07166.1"/>
    <property type="molecule type" value="Genomic_DNA"/>
</dbReference>
<dbReference type="SMR" id="B3PMB4"/>
<dbReference type="STRING" id="243272.MARTH_orf262"/>
<dbReference type="KEGG" id="mat:MARTH_orf262"/>
<dbReference type="eggNOG" id="COG0275">
    <property type="taxonomic scope" value="Bacteria"/>
</dbReference>
<dbReference type="HOGENOM" id="CLU_038422_2_0_14"/>
<dbReference type="Proteomes" id="UP000008812">
    <property type="component" value="Chromosome"/>
</dbReference>
<dbReference type="GO" id="GO:0005737">
    <property type="term" value="C:cytoplasm"/>
    <property type="evidence" value="ECO:0007669"/>
    <property type="project" value="UniProtKB-SubCell"/>
</dbReference>
<dbReference type="GO" id="GO:0071424">
    <property type="term" value="F:rRNA (cytosine-N4-)-methyltransferase activity"/>
    <property type="evidence" value="ECO:0007669"/>
    <property type="project" value="UniProtKB-UniRule"/>
</dbReference>
<dbReference type="GO" id="GO:0070475">
    <property type="term" value="P:rRNA base methylation"/>
    <property type="evidence" value="ECO:0007669"/>
    <property type="project" value="UniProtKB-UniRule"/>
</dbReference>
<dbReference type="Gene3D" id="1.10.150.170">
    <property type="entry name" value="Putative methyltransferase TM0872, insert domain"/>
    <property type="match status" value="1"/>
</dbReference>
<dbReference type="Gene3D" id="3.40.50.150">
    <property type="entry name" value="Vaccinia Virus protein VP39"/>
    <property type="match status" value="1"/>
</dbReference>
<dbReference type="HAMAP" id="MF_01007">
    <property type="entry name" value="16SrRNA_methyltr_H"/>
    <property type="match status" value="1"/>
</dbReference>
<dbReference type="InterPro" id="IPR002903">
    <property type="entry name" value="RsmH"/>
</dbReference>
<dbReference type="InterPro" id="IPR023397">
    <property type="entry name" value="SAM-dep_MeTrfase_MraW_recog"/>
</dbReference>
<dbReference type="InterPro" id="IPR029063">
    <property type="entry name" value="SAM-dependent_MTases_sf"/>
</dbReference>
<dbReference type="NCBIfam" id="TIGR00006">
    <property type="entry name" value="16S rRNA (cytosine(1402)-N(4))-methyltransferase RsmH"/>
    <property type="match status" value="1"/>
</dbReference>
<dbReference type="PANTHER" id="PTHR11265:SF0">
    <property type="entry name" value="12S RRNA N4-METHYLCYTIDINE METHYLTRANSFERASE"/>
    <property type="match status" value="1"/>
</dbReference>
<dbReference type="PANTHER" id="PTHR11265">
    <property type="entry name" value="S-ADENOSYL-METHYLTRANSFERASE MRAW"/>
    <property type="match status" value="1"/>
</dbReference>
<dbReference type="Pfam" id="PF01795">
    <property type="entry name" value="Methyltransf_5"/>
    <property type="match status" value="1"/>
</dbReference>
<dbReference type="PIRSF" id="PIRSF004486">
    <property type="entry name" value="MraW"/>
    <property type="match status" value="1"/>
</dbReference>
<dbReference type="SUPFAM" id="SSF81799">
    <property type="entry name" value="Putative methyltransferase TM0872, insert domain"/>
    <property type="match status" value="1"/>
</dbReference>
<dbReference type="SUPFAM" id="SSF53335">
    <property type="entry name" value="S-adenosyl-L-methionine-dependent methyltransferases"/>
    <property type="match status" value="1"/>
</dbReference>
<sequence length="286" mass="32334">MEIKSDGTYVDLTLGRAGHSLEILKKLINGRLICFDKDNEAIKESYKKLQKISPNFTLIQNDFRFLKAELEKLGINEVDGILADLGVSSPQIDDPTRGFSYSQEGPLDMRMNQQNSFSAKDIIDNFDESELTKILIKNADVKLANLVAKAIVAKRPIKSTSELVEIIKNALPAKIVREKNPAKAVFQALRIEVNDELGALTAMLADATQLLKKDGKILIITFHSKEDSIVKNFFQKQNYVDPRLNKLPINIQKIWKQKIIFPSEDEKLQNNRSRSAKLRVVKKLSI</sequence>
<name>RSMH_META1</name>
<proteinExistence type="inferred from homology"/>
<evidence type="ECO:0000255" key="1">
    <source>
        <dbReference type="HAMAP-Rule" id="MF_01007"/>
    </source>
</evidence>
<feature type="chain" id="PRO_0000386999" description="Ribosomal RNA small subunit methyltransferase H">
    <location>
        <begin position="1"/>
        <end position="286"/>
    </location>
</feature>
<feature type="binding site" evidence="1">
    <location>
        <begin position="17"/>
        <end position="19"/>
    </location>
    <ligand>
        <name>S-adenosyl-L-methionine</name>
        <dbReference type="ChEBI" id="CHEBI:59789"/>
    </ligand>
</feature>
<feature type="binding site" evidence="1">
    <location>
        <position position="36"/>
    </location>
    <ligand>
        <name>S-adenosyl-L-methionine</name>
        <dbReference type="ChEBI" id="CHEBI:59789"/>
    </ligand>
</feature>
<feature type="binding site" evidence="1">
    <location>
        <position position="63"/>
    </location>
    <ligand>
        <name>S-adenosyl-L-methionine</name>
        <dbReference type="ChEBI" id="CHEBI:59789"/>
    </ligand>
</feature>
<feature type="binding site" evidence="1">
    <location>
        <position position="84"/>
    </location>
    <ligand>
        <name>S-adenosyl-L-methionine</name>
        <dbReference type="ChEBI" id="CHEBI:59789"/>
    </ligand>
</feature>
<feature type="binding site" evidence="1">
    <location>
        <position position="91"/>
    </location>
    <ligand>
        <name>S-adenosyl-L-methionine</name>
        <dbReference type="ChEBI" id="CHEBI:59789"/>
    </ligand>
</feature>